<feature type="chain" id="PRO_0000287312" description="Haloacid dehalogenase-like hydrolase domain-containing protein 3">
    <location>
        <begin position="1"/>
        <end position="251"/>
    </location>
</feature>
<feature type="modified residue" description="N6-acetyllysine; alternate" evidence="1">
    <location>
        <position position="15"/>
    </location>
</feature>
<feature type="modified residue" description="N6-succinyllysine; alternate" evidence="2">
    <location>
        <position position="15"/>
    </location>
</feature>
<feature type="modified residue" description="N6-acetyllysine" evidence="2">
    <location>
        <position position="130"/>
    </location>
</feature>
<dbReference type="EMBL" id="BT020984">
    <property type="protein sequence ID" value="AAX09001.1"/>
    <property type="molecule type" value="mRNA"/>
</dbReference>
<dbReference type="EMBL" id="BC102640">
    <property type="protein sequence ID" value="AAI02641.1"/>
    <property type="molecule type" value="mRNA"/>
</dbReference>
<dbReference type="RefSeq" id="NP_001014896.1">
    <property type="nucleotide sequence ID" value="NM_001014896.1"/>
</dbReference>
<dbReference type="RefSeq" id="XP_015328172.1">
    <property type="nucleotide sequence ID" value="XM_015472686.1"/>
</dbReference>
<dbReference type="SMR" id="Q5E9D6"/>
<dbReference type="FunCoup" id="Q5E9D6">
    <property type="interactions" value="920"/>
</dbReference>
<dbReference type="STRING" id="9913.ENSBTAP00000000314"/>
<dbReference type="PaxDb" id="9913-ENSBTAP00000000314"/>
<dbReference type="GeneID" id="510680"/>
<dbReference type="KEGG" id="bta:510680"/>
<dbReference type="CTD" id="81932"/>
<dbReference type="eggNOG" id="KOG3085">
    <property type="taxonomic scope" value="Eukaryota"/>
</dbReference>
<dbReference type="HOGENOM" id="CLU_045011_8_0_1"/>
<dbReference type="InParanoid" id="Q5E9D6"/>
<dbReference type="OrthoDB" id="444127at2759"/>
<dbReference type="TreeFam" id="TF315144"/>
<dbReference type="Proteomes" id="UP000009136">
    <property type="component" value="Unplaced"/>
</dbReference>
<dbReference type="GO" id="GO:0005634">
    <property type="term" value="C:nucleus"/>
    <property type="evidence" value="ECO:0000318"/>
    <property type="project" value="GO_Central"/>
</dbReference>
<dbReference type="CDD" id="cd16415">
    <property type="entry name" value="HAD_dREG-2_like"/>
    <property type="match status" value="1"/>
</dbReference>
<dbReference type="Gene3D" id="3.40.50.1000">
    <property type="entry name" value="HAD superfamily/HAD-like"/>
    <property type="match status" value="1"/>
</dbReference>
<dbReference type="Gene3D" id="1.10.150.720">
    <property type="entry name" value="Haloacid dehalogenase-like hydrolase"/>
    <property type="match status" value="1"/>
</dbReference>
<dbReference type="InterPro" id="IPR051828">
    <property type="entry name" value="HAD-like_hydrolase_domain"/>
</dbReference>
<dbReference type="InterPro" id="IPR036412">
    <property type="entry name" value="HAD-like_sf"/>
</dbReference>
<dbReference type="InterPro" id="IPR006439">
    <property type="entry name" value="HAD-SF_hydro_IA"/>
</dbReference>
<dbReference type="InterPro" id="IPR011949">
    <property type="entry name" value="HAD-SF_hydro_IA_REG-2-like"/>
</dbReference>
<dbReference type="InterPro" id="IPR044924">
    <property type="entry name" value="HAD-SF_hydro_IA_REG-2-like_cap"/>
</dbReference>
<dbReference type="InterPro" id="IPR023214">
    <property type="entry name" value="HAD_sf"/>
</dbReference>
<dbReference type="NCBIfam" id="TIGR02252">
    <property type="entry name" value="DREG-2"/>
    <property type="match status" value="1"/>
</dbReference>
<dbReference type="NCBIfam" id="TIGR01549">
    <property type="entry name" value="HAD-SF-IA-v1"/>
    <property type="match status" value="1"/>
</dbReference>
<dbReference type="NCBIfam" id="TIGR01509">
    <property type="entry name" value="HAD-SF-IA-v3"/>
    <property type="match status" value="1"/>
</dbReference>
<dbReference type="PANTHER" id="PTHR46191">
    <property type="match status" value="1"/>
</dbReference>
<dbReference type="PANTHER" id="PTHR46191:SF2">
    <property type="entry name" value="HALOACID DEHALOGENASE-LIKE HYDROLASE DOMAIN-CONTAINING PROTEIN 3"/>
    <property type="match status" value="1"/>
</dbReference>
<dbReference type="Pfam" id="PF00702">
    <property type="entry name" value="Hydrolase"/>
    <property type="match status" value="1"/>
</dbReference>
<dbReference type="PRINTS" id="PR00413">
    <property type="entry name" value="HADHALOGNASE"/>
</dbReference>
<dbReference type="SFLD" id="SFLDG01135">
    <property type="entry name" value="C1.5.6:_HAD__Beta-PGM__Phospha"/>
    <property type="match status" value="1"/>
</dbReference>
<dbReference type="SFLD" id="SFLDG01129">
    <property type="entry name" value="C1.5:_HAD__Beta-PGM__Phosphata"/>
    <property type="match status" value="1"/>
</dbReference>
<dbReference type="SUPFAM" id="SSF56784">
    <property type="entry name" value="HAD-like"/>
    <property type="match status" value="1"/>
</dbReference>
<accession>Q5E9D6</accession>
<reference key="1">
    <citation type="journal article" date="2005" name="BMC Genomics">
        <title>Characterization of 954 bovine full-CDS cDNA sequences.</title>
        <authorList>
            <person name="Harhay G.P."/>
            <person name="Sonstegard T.S."/>
            <person name="Keele J.W."/>
            <person name="Heaton M.P."/>
            <person name="Clawson M.L."/>
            <person name="Snelling W.M."/>
            <person name="Wiedmann R.T."/>
            <person name="Van Tassell C.P."/>
            <person name="Smith T.P.L."/>
        </authorList>
    </citation>
    <scope>NUCLEOTIDE SEQUENCE [LARGE SCALE MRNA]</scope>
</reference>
<reference key="2">
    <citation type="submission" date="2005-08" db="EMBL/GenBank/DDBJ databases">
        <authorList>
            <consortium name="NIH - Mammalian Gene Collection (MGC) project"/>
        </authorList>
    </citation>
    <scope>NUCLEOTIDE SEQUENCE [LARGE SCALE MRNA]</scope>
    <source>
        <strain>Crossbred X Angus</strain>
        <tissue>Ileum</tissue>
    </source>
</reference>
<organism>
    <name type="scientific">Bos taurus</name>
    <name type="common">Bovine</name>
    <dbReference type="NCBI Taxonomy" id="9913"/>
    <lineage>
        <taxon>Eukaryota</taxon>
        <taxon>Metazoa</taxon>
        <taxon>Chordata</taxon>
        <taxon>Craniata</taxon>
        <taxon>Vertebrata</taxon>
        <taxon>Euteleostomi</taxon>
        <taxon>Mammalia</taxon>
        <taxon>Eutheria</taxon>
        <taxon>Laurasiatheria</taxon>
        <taxon>Artiodactyla</taxon>
        <taxon>Ruminantia</taxon>
        <taxon>Pecora</taxon>
        <taxon>Bovidae</taxon>
        <taxon>Bovinae</taxon>
        <taxon>Bos</taxon>
    </lineage>
</organism>
<proteinExistence type="evidence at transcript level"/>
<gene>
    <name type="primary">HDHD3</name>
</gene>
<comment type="similarity">
    <text evidence="3">Belongs to the HAD-like hydrolase superfamily.</text>
</comment>
<sequence length="251" mass="27883">MAHRLQLRLLTWDVKDTLLRLRHPVGVEYATKARAHGLEVEATALGQAFKQAYKAQSQSFPNYGLGHGLTSHQWWLDLVQQTFHQAGVRDAQAVAPIAEQLYKDFSSPSTWQVLEGAEATLRGCRKRGLKLAVVSNFDRRLEDILEGVGLREHFDFVLTSEAAGWPKPDPRIFHEALHLAQVEPAVGAHIGDSYQRDYKGARAVGMHSFLVAGPEPLDPAVKDSVPQEHFLPSLSHLLPALDYLEGSSARL</sequence>
<evidence type="ECO:0000250" key="1">
    <source>
        <dbReference type="UniProtKB" id="Q9BSH5"/>
    </source>
</evidence>
<evidence type="ECO:0000250" key="2">
    <source>
        <dbReference type="UniProtKB" id="Q9CYW4"/>
    </source>
</evidence>
<evidence type="ECO:0000305" key="3"/>
<keyword id="KW-0007">Acetylation</keyword>
<keyword id="KW-1185">Reference proteome</keyword>
<protein>
    <recommendedName>
        <fullName>Haloacid dehalogenase-like hydrolase domain-containing protein 3</fullName>
    </recommendedName>
</protein>
<name>HDHD3_BOVIN</name>